<accession>P31309</accession>
<protein>
    <recommendedName>
        <fullName evidence="1">Manganese import system permease protein ScaB</fullName>
    </recommendedName>
    <alternativeName>
        <fullName>ORF1</fullName>
    </alternativeName>
</protein>
<dbReference type="EMBL" id="M26130">
    <property type="protein sequence ID" value="AAA53076.1"/>
    <property type="molecule type" value="Genomic_DNA"/>
</dbReference>
<dbReference type="PIR" id="S61911">
    <property type="entry name" value="S61911"/>
</dbReference>
<dbReference type="RefSeq" id="WP_014712826.1">
    <property type="nucleotide sequence ID" value="NZ_JBDMCF010000028.1"/>
</dbReference>
<dbReference type="SMR" id="P31309"/>
<dbReference type="GO" id="GO:0043190">
    <property type="term" value="C:ATP-binding cassette (ABC) transporter complex"/>
    <property type="evidence" value="ECO:0007669"/>
    <property type="project" value="InterPro"/>
</dbReference>
<dbReference type="GO" id="GO:0010043">
    <property type="term" value="P:response to zinc ion"/>
    <property type="evidence" value="ECO:0007669"/>
    <property type="project" value="TreeGrafter"/>
</dbReference>
<dbReference type="GO" id="GO:0055085">
    <property type="term" value="P:transmembrane transport"/>
    <property type="evidence" value="ECO:0007669"/>
    <property type="project" value="InterPro"/>
</dbReference>
<dbReference type="CDD" id="cd06550">
    <property type="entry name" value="TM_ABC_iron-siderophores_like"/>
    <property type="match status" value="1"/>
</dbReference>
<dbReference type="FunFam" id="1.10.3470.10:FF:000003">
    <property type="entry name" value="Iron ABC transporter permease SitD"/>
    <property type="match status" value="1"/>
</dbReference>
<dbReference type="Gene3D" id="1.10.3470.10">
    <property type="entry name" value="ABC transporter involved in vitamin B12 uptake, BtuC"/>
    <property type="match status" value="1"/>
</dbReference>
<dbReference type="InterPro" id="IPR037294">
    <property type="entry name" value="ABC_BtuC-like"/>
</dbReference>
<dbReference type="InterPro" id="IPR001626">
    <property type="entry name" value="ABC_TroCD"/>
</dbReference>
<dbReference type="NCBIfam" id="NF040927">
    <property type="entry name" value="ABC_perm_SloB"/>
    <property type="match status" value="1"/>
</dbReference>
<dbReference type="PANTHER" id="PTHR30477">
    <property type="entry name" value="ABC-TRANSPORTER METAL-BINDING PROTEIN"/>
    <property type="match status" value="1"/>
</dbReference>
<dbReference type="PANTHER" id="PTHR30477:SF13">
    <property type="entry name" value="IRON TRANSPORT SYSTEM MEMBRANE PROTEIN HI_0360-RELATED"/>
    <property type="match status" value="1"/>
</dbReference>
<dbReference type="Pfam" id="PF00950">
    <property type="entry name" value="ABC-3"/>
    <property type="match status" value="1"/>
</dbReference>
<dbReference type="SUPFAM" id="SSF81345">
    <property type="entry name" value="ABC transporter involved in vitamin B12 uptake, BtuC"/>
    <property type="match status" value="1"/>
</dbReference>
<keyword id="KW-1003">Cell membrane</keyword>
<keyword id="KW-0472">Membrane</keyword>
<keyword id="KW-0812">Transmembrane</keyword>
<keyword id="KW-1133">Transmembrane helix</keyword>
<keyword id="KW-0813">Transport</keyword>
<comment type="function">
    <text evidence="1 4">Part of an ABC transporter complex involved in manganese import.</text>
</comment>
<comment type="subcellular location">
    <subcellularLocation>
        <location evidence="3">Cell membrane</location>
        <topology evidence="2">Multi-pass membrane protein</topology>
    </subcellularLocation>
</comment>
<comment type="similarity">
    <text evidence="3">Belongs to the ABC-3 integral membrane protein family.</text>
</comment>
<sequence length="280" mass="29882">MITEFIDGLQQFHFLQNALITAIAIGIVAGAVGCFIILRGMSLMGDAISHAVLPGVALSFILGINFFIGAIVFGLLASILITYIKSNSIIKSDTAIGITFSSFLALGVILIGVAKSSTDLFHILFGNILAVQDQDMWMTIGVGVTVLLVICLLFRPLLLTSFDPVLAQSMGVRVKIYHYLLMVLLTLVSVTAMQSVGTILIVAMLITPAATAYLYANSLWSMMLLSSSLGALASILGLFIGYSLNIAVGSCIVLTSAVFFLISFFIAPKQRKNKHALSSH</sequence>
<evidence type="ECO:0000250" key="1">
    <source>
        <dbReference type="UniProtKB" id="P42361"/>
    </source>
</evidence>
<evidence type="ECO:0000255" key="2"/>
<evidence type="ECO:0000305" key="3"/>
<evidence type="ECO:0000305" key="4">
    <source>
    </source>
</evidence>
<reference key="1">
    <citation type="journal article" date="1989" name="Infect. Immun.">
        <title>Nucleotide sequence analysis of a type 1 fimbrial gene of Streptococcus sanguis FW213.</title>
        <authorList>
            <person name="Fenno J.C."/>
            <person name="Leblanc D.J."/>
            <person name="Fives-Taylor P.M."/>
        </authorList>
    </citation>
    <scope>NUCLEOTIDE SEQUENCE [GENOMIC DNA]</scope>
    <source>
        <strain>FW213</strain>
    </source>
</reference>
<reference key="2">
    <citation type="journal article" date="1995" name="Mol. Microbiol.">
        <title>The fimA locus of Streptococcus parasanguis encodes an ATP-binding membrane transport system.</title>
        <authorList>
            <person name="Fenno J.C."/>
            <person name="Shaikh A."/>
            <person name="Spatafora G."/>
            <person name="Fives-Taylor P."/>
        </authorList>
    </citation>
    <scope>POSSIBLE FUNCTION</scope>
</reference>
<feature type="chain" id="PRO_0000171178" description="Manganese import system permease protein ScaB">
    <location>
        <begin position="1"/>
        <end position="280"/>
    </location>
</feature>
<feature type="transmembrane region" description="Helical" evidence="2">
    <location>
        <begin position="18"/>
        <end position="38"/>
    </location>
</feature>
<feature type="transmembrane region" description="Helical" evidence="2">
    <location>
        <begin position="61"/>
        <end position="81"/>
    </location>
</feature>
<feature type="transmembrane region" description="Helical" evidence="2">
    <location>
        <begin position="94"/>
        <end position="114"/>
    </location>
</feature>
<feature type="transmembrane region" description="Helical" evidence="2">
    <location>
        <begin position="139"/>
        <end position="159"/>
    </location>
</feature>
<feature type="transmembrane region" description="Helical" evidence="2">
    <location>
        <begin position="174"/>
        <end position="194"/>
    </location>
</feature>
<feature type="transmembrane region" description="Helical" evidence="2">
    <location>
        <begin position="196"/>
        <end position="216"/>
    </location>
</feature>
<feature type="transmembrane region" description="Helical" evidence="2">
    <location>
        <begin position="222"/>
        <end position="242"/>
    </location>
</feature>
<feature type="transmembrane region" description="Helical" evidence="2">
    <location>
        <begin position="246"/>
        <end position="266"/>
    </location>
</feature>
<organism>
    <name type="scientific">Streptococcus parasanguinis</name>
    <dbReference type="NCBI Taxonomy" id="1318"/>
    <lineage>
        <taxon>Bacteria</taxon>
        <taxon>Bacillati</taxon>
        <taxon>Bacillota</taxon>
        <taxon>Bacilli</taxon>
        <taxon>Lactobacillales</taxon>
        <taxon>Streptococcaceae</taxon>
        <taxon>Streptococcus</taxon>
    </lineage>
</organism>
<name>MTSB_STRPA</name>
<proteinExistence type="inferred from homology"/>